<keyword id="KW-0221">Differentiation</keyword>
<keyword id="KW-0726">Sexual differentiation</keyword>
<protein>
    <recommendedName>
        <fullName>Sex-regulated protein janus-A</fullName>
    </recommendedName>
</protein>
<accession>Q9BM99</accession>
<accession>Q5Y7Z5</accession>
<accession>Q95VY7</accession>
<accession>Q9BH68</accession>
<accession>Q9BMZ7</accession>
<evidence type="ECO:0000250" key="1"/>
<evidence type="ECO:0000269" key="2">
    <source>
    </source>
</evidence>
<evidence type="ECO:0000305" key="3"/>
<evidence type="ECO:0000312" key="4">
    <source>
        <dbReference type="EMBL" id="AAG49466.1"/>
    </source>
</evidence>
<evidence type="ECO:0000312" key="5">
    <source>
        <dbReference type="EMBL" id="AAG49468.1"/>
    </source>
</evidence>
<evidence type="ECO:0000312" key="6">
    <source>
        <dbReference type="EMBL" id="AAG49470.1"/>
    </source>
</evidence>
<evidence type="ECO:0000312" key="7">
    <source>
        <dbReference type="EMBL" id="AAK72008.1"/>
    </source>
</evidence>
<evidence type="ECO:0000312" key="8">
    <source>
        <dbReference type="EMBL" id="AAK72009.1"/>
    </source>
</evidence>
<evidence type="ECO:0000312" key="9">
    <source>
        <dbReference type="EMBL" id="AAK72010.1"/>
    </source>
</evidence>
<evidence type="ECO:0000312" key="10">
    <source>
        <dbReference type="EMBL" id="AAK72011.1"/>
    </source>
</evidence>
<evidence type="ECO:0000312" key="11">
    <source>
        <dbReference type="EMBL" id="AAK72012.1"/>
    </source>
</evidence>
<evidence type="ECO:0000312" key="12">
    <source>
        <dbReference type="EMBL" id="AAK72013.1"/>
    </source>
</evidence>
<evidence type="ECO:0000312" key="13">
    <source>
        <dbReference type="EMBL" id="AAK72014.1"/>
    </source>
</evidence>
<evidence type="ECO:0000312" key="14">
    <source>
        <dbReference type="EMBL" id="AAK72015.1"/>
    </source>
</evidence>
<evidence type="ECO:0000312" key="15">
    <source>
        <dbReference type="EMBL" id="AAK72016.1"/>
    </source>
</evidence>
<evidence type="ECO:0000312" key="16">
    <source>
        <dbReference type="EMBL" id="AAK72017.1"/>
    </source>
</evidence>
<evidence type="ECO:0000312" key="17">
    <source>
        <dbReference type="EMBL" id="AAK72018.1"/>
    </source>
</evidence>
<evidence type="ECO:0000312" key="18">
    <source>
        <dbReference type="EMBL" id="AAK72019.1"/>
    </source>
</evidence>
<evidence type="ECO:0000312" key="19">
    <source>
        <dbReference type="EMBL" id="AAK72020.1"/>
    </source>
</evidence>
<dbReference type="EMBL" id="AY013339">
    <property type="protein sequence ID" value="AAG50360.1"/>
    <property type="molecule type" value="Genomic_DNA"/>
</dbReference>
<dbReference type="EMBL" id="AF393330">
    <property type="protein sequence ID" value="AAK72008.1"/>
    <property type="molecule type" value="Genomic_DNA"/>
</dbReference>
<dbReference type="EMBL" id="AF393331">
    <property type="protein sequence ID" value="AAK72009.1"/>
    <property type="molecule type" value="Genomic_DNA"/>
</dbReference>
<dbReference type="EMBL" id="AF393332">
    <property type="protein sequence ID" value="AAK72010.1"/>
    <property type="molecule type" value="Genomic_DNA"/>
</dbReference>
<dbReference type="EMBL" id="AF393333">
    <property type="protein sequence ID" value="AAK72011.1"/>
    <property type="molecule type" value="Genomic_DNA"/>
</dbReference>
<dbReference type="EMBL" id="AF393334">
    <property type="protein sequence ID" value="AAK72012.1"/>
    <property type="molecule type" value="Genomic_DNA"/>
</dbReference>
<dbReference type="EMBL" id="AF393335">
    <property type="protein sequence ID" value="AAK72013.1"/>
    <property type="molecule type" value="Genomic_DNA"/>
</dbReference>
<dbReference type="EMBL" id="AF393336">
    <property type="protein sequence ID" value="AAK72014.1"/>
    <property type="molecule type" value="Genomic_DNA"/>
</dbReference>
<dbReference type="EMBL" id="AF393337">
    <property type="protein sequence ID" value="AAK72015.1"/>
    <property type="molecule type" value="Genomic_DNA"/>
</dbReference>
<dbReference type="EMBL" id="AF393338">
    <property type="protein sequence ID" value="AAK72016.1"/>
    <property type="molecule type" value="Genomic_DNA"/>
</dbReference>
<dbReference type="EMBL" id="AF393339">
    <property type="protein sequence ID" value="AAK72017.1"/>
    <property type="molecule type" value="Genomic_DNA"/>
</dbReference>
<dbReference type="EMBL" id="AF393340">
    <property type="protein sequence ID" value="AAK72018.1"/>
    <property type="molecule type" value="Genomic_DNA"/>
</dbReference>
<dbReference type="EMBL" id="AF393341">
    <property type="protein sequence ID" value="AAK72019.1"/>
    <property type="molecule type" value="Genomic_DNA"/>
</dbReference>
<dbReference type="EMBL" id="AF393342">
    <property type="protein sequence ID" value="AAK72020.1"/>
    <property type="molecule type" value="Genomic_DNA"/>
</dbReference>
<dbReference type="EMBL" id="AY663111">
    <property type="protein sequence ID" value="AAU81681.1"/>
    <property type="molecule type" value="Genomic_DNA"/>
</dbReference>
<dbReference type="EMBL" id="AY663112">
    <property type="protein sequence ID" value="AAU81682.1"/>
    <property type="molecule type" value="Genomic_DNA"/>
</dbReference>
<dbReference type="EMBL" id="AY663113">
    <property type="protein sequence ID" value="AAU81683.1"/>
    <property type="molecule type" value="Genomic_DNA"/>
</dbReference>
<dbReference type="EMBL" id="AY663114">
    <property type="protein sequence ID" value="AAU81684.1"/>
    <property type="molecule type" value="Genomic_DNA"/>
</dbReference>
<dbReference type="EMBL" id="AY663115">
    <property type="protein sequence ID" value="AAU81685.1"/>
    <property type="molecule type" value="Genomic_DNA"/>
</dbReference>
<dbReference type="EMBL" id="AY663116">
    <property type="protein sequence ID" value="AAU81686.1"/>
    <property type="molecule type" value="Genomic_DNA"/>
</dbReference>
<dbReference type="EMBL" id="AY663117">
    <property type="protein sequence ID" value="AAU81687.1"/>
    <property type="molecule type" value="Genomic_DNA"/>
</dbReference>
<dbReference type="EMBL" id="AY663118">
    <property type="protein sequence ID" value="AAU81688.1"/>
    <property type="molecule type" value="Genomic_DNA"/>
</dbReference>
<dbReference type="EMBL" id="AY663119">
    <property type="protein sequence ID" value="AAU81689.1"/>
    <property type="molecule type" value="Genomic_DNA"/>
</dbReference>
<dbReference type="EMBL" id="AY663120">
    <property type="protein sequence ID" value="AAU81690.1"/>
    <property type="molecule type" value="Genomic_DNA"/>
</dbReference>
<dbReference type="EMBL" id="AY663121">
    <property type="protein sequence ID" value="AAU81691.1"/>
    <property type="molecule type" value="Genomic_DNA"/>
</dbReference>
<dbReference type="EMBL" id="AY663122">
    <property type="protein sequence ID" value="AAU81692.1"/>
    <property type="molecule type" value="Genomic_DNA"/>
</dbReference>
<dbReference type="EMBL" id="AY663123">
    <property type="protein sequence ID" value="AAU81693.1"/>
    <property type="molecule type" value="Genomic_DNA"/>
</dbReference>
<dbReference type="EMBL" id="AY663124">
    <property type="protein sequence ID" value="AAU81694.1"/>
    <property type="molecule type" value="Genomic_DNA"/>
</dbReference>
<dbReference type="EMBL" id="AY663125">
    <property type="protein sequence ID" value="AAU81695.1"/>
    <property type="molecule type" value="Genomic_DNA"/>
</dbReference>
<dbReference type="EMBL" id="AY663126">
    <property type="protein sequence ID" value="AAU81696.1"/>
    <property type="molecule type" value="Genomic_DNA"/>
</dbReference>
<dbReference type="EMBL" id="AY663127">
    <property type="protein sequence ID" value="AAU81697.1"/>
    <property type="molecule type" value="Genomic_DNA"/>
</dbReference>
<dbReference type="EMBL" id="AY663128">
    <property type="protein sequence ID" value="AAU81698.1"/>
    <property type="molecule type" value="Genomic_DNA"/>
</dbReference>
<dbReference type="EMBL" id="AY663129">
    <property type="protein sequence ID" value="AAU81699.1"/>
    <property type="molecule type" value="Genomic_DNA"/>
</dbReference>
<dbReference type="EMBL" id="AY663130">
    <property type="protein sequence ID" value="AAU81700.1"/>
    <property type="molecule type" value="Genomic_DNA"/>
</dbReference>
<dbReference type="EMBL" id="AY663131">
    <property type="protein sequence ID" value="AAU81701.1"/>
    <property type="molecule type" value="Genomic_DNA"/>
</dbReference>
<dbReference type="EMBL" id="AY663132">
    <property type="protein sequence ID" value="AAU81702.1"/>
    <property type="molecule type" value="Genomic_DNA"/>
</dbReference>
<dbReference type="EMBL" id="AF284453">
    <property type="protein sequence ID" value="AAG49466.1"/>
    <property type="molecule type" value="Genomic_DNA"/>
</dbReference>
<dbReference type="EMBL" id="AF284454">
    <property type="protein sequence ID" value="AAG49468.1"/>
    <property type="molecule type" value="Genomic_DNA"/>
</dbReference>
<dbReference type="EMBL" id="AF284455">
    <property type="protein sequence ID" value="AAG49470.1"/>
    <property type="molecule type" value="Genomic_DNA"/>
</dbReference>
<dbReference type="SMR" id="Q9BM99"/>
<dbReference type="OrthoDB" id="10249612at2759"/>
<dbReference type="GO" id="GO:0005829">
    <property type="term" value="C:cytosol"/>
    <property type="evidence" value="ECO:0007669"/>
    <property type="project" value="TreeGrafter"/>
</dbReference>
<dbReference type="GO" id="GO:0101006">
    <property type="term" value="F:protein histidine phosphatase activity"/>
    <property type="evidence" value="ECO:0007669"/>
    <property type="project" value="TreeGrafter"/>
</dbReference>
<dbReference type="GO" id="GO:0030154">
    <property type="term" value="P:cell differentiation"/>
    <property type="evidence" value="ECO:0007669"/>
    <property type="project" value="UniProtKB-KW"/>
</dbReference>
<dbReference type="GO" id="GO:0007548">
    <property type="term" value="P:sex differentiation"/>
    <property type="evidence" value="ECO:0000250"/>
    <property type="project" value="UniProtKB"/>
</dbReference>
<dbReference type="FunFam" id="3.50.20.20:FF:000001">
    <property type="entry name" value="14 kDa phosphohistidine phosphatase"/>
    <property type="match status" value="1"/>
</dbReference>
<dbReference type="Gene3D" id="3.50.20.20">
    <property type="entry name" value="Janus/Ocnus"/>
    <property type="match status" value="1"/>
</dbReference>
<dbReference type="InterPro" id="IPR007702">
    <property type="entry name" value="Janus"/>
</dbReference>
<dbReference type="InterPro" id="IPR038596">
    <property type="entry name" value="Janus_sf"/>
</dbReference>
<dbReference type="PANTHER" id="PTHR12258:SF5">
    <property type="entry name" value="BCDNA.GH02250-RELATED"/>
    <property type="match status" value="1"/>
</dbReference>
<dbReference type="PANTHER" id="PTHR12258">
    <property type="entry name" value="JANUS-A/JANUS-B"/>
    <property type="match status" value="1"/>
</dbReference>
<dbReference type="Pfam" id="PF05005">
    <property type="entry name" value="Ocnus"/>
    <property type="match status" value="1"/>
</dbReference>
<dbReference type="SUPFAM" id="SSF143724">
    <property type="entry name" value="PHP14-like"/>
    <property type="match status" value="1"/>
</dbReference>
<gene>
    <name type="primary">janA</name>
</gene>
<feature type="chain" id="PRO_0000206161" description="Sex-regulated protein janus-A">
    <location>
        <begin position="1"/>
        <end position="135"/>
    </location>
</feature>
<feature type="active site" description="Proton acceptor" evidence="1">
    <location>
        <position position="63"/>
    </location>
</feature>
<feature type="binding site" evidence="1">
    <location>
        <position position="37"/>
    </location>
    <ligand>
        <name>substrate</name>
    </ligand>
</feature>
<feature type="binding site" evidence="1">
    <location>
        <begin position="104"/>
        <end position="106"/>
    </location>
    <ligand>
        <name>substrate</name>
    </ligand>
</feature>
<feature type="sequence variant" description="In strain: s2." evidence="2">
    <original>M</original>
    <variation>L</variation>
    <location>
        <position position="17"/>
    </location>
</feature>
<feature type="sequence conflict" description="In Ref. 4; AAG49466/AAG49468/AAG49470." evidence="3" ref="4">
    <original>G</original>
    <variation>R</variation>
    <location>
        <position position="56"/>
    </location>
</feature>
<organism evidence="7">
    <name type="scientific">Drosophila simulans</name>
    <name type="common">Fruit fly</name>
    <dbReference type="NCBI Taxonomy" id="7240"/>
    <lineage>
        <taxon>Eukaryota</taxon>
        <taxon>Metazoa</taxon>
        <taxon>Ecdysozoa</taxon>
        <taxon>Arthropoda</taxon>
        <taxon>Hexapoda</taxon>
        <taxon>Insecta</taxon>
        <taxon>Pterygota</taxon>
        <taxon>Neoptera</taxon>
        <taxon>Endopterygota</taxon>
        <taxon>Diptera</taxon>
        <taxon>Brachycera</taxon>
        <taxon>Muscomorpha</taxon>
        <taxon>Ephydroidea</taxon>
        <taxon>Drosophilidae</taxon>
        <taxon>Drosophila</taxon>
        <taxon>Sophophora</taxon>
    </lineage>
</organism>
<name>JANA_DROSI</name>
<comment type="function">
    <text evidence="1">JanA and janB regulate somatic sex differentiation.</text>
</comment>
<comment type="similarity">
    <text evidence="3">Belongs to the janus family.</text>
</comment>
<proteinExistence type="inferred from homology"/>
<sequence length="135" mass="15206">MNRFQLLSKGLRLIHKMSEEALAGVPLVHISPEGIFKYVMINVIDGGDASKAVIRGFADCTWHADIFEREEEVFKKLGLRAECPGGGRIEHNPDKKYLKVYGYSQGFGKADHAQTKRILATKYPDYTIEISDEGY</sequence>
<reference evidence="3" key="1">
    <citation type="journal article" date="2001" name="Mol. Biol. Evol.">
        <title>Molecular evolution of the ocnus and janus genes in the Drosophila melanogaster species subgroup.</title>
        <authorList>
            <person name="Parsch J."/>
            <person name="Meiklejohn C.D."/>
            <person name="Hauschteck-Jungen E."/>
            <person name="Hunziker P."/>
            <person name="Hartl D.L."/>
        </authorList>
    </citation>
    <scope>NUCLEOTIDE SEQUENCE [GENOMIC DNA]</scope>
</reference>
<reference evidence="3" key="2">
    <citation type="journal article" date="2001" name="Genetics">
        <title>Patterns of DNA sequence variation suggest the recent action of positive selection in the janus-ocnus region of Drosophila simulans.</title>
        <authorList>
            <person name="Parsch J."/>
            <person name="Meiklejohn C.D."/>
            <person name="Hartl D.L."/>
        </authorList>
    </citation>
    <scope>NUCLEOTIDE SEQUENCE [GENOMIC DNA]</scope>
    <source>
        <strain evidence="14">s17</strain>
        <strain evidence="15">s19</strain>
        <strain evidence="7">s2</strain>
        <strain evidence="16">s25</strain>
        <strain evidence="8">s3</strain>
        <strain evidence="17">s31</strain>
        <strain evidence="18">s34</strain>
        <strain evidence="19">s36</strain>
        <strain evidence="9">s4</strain>
        <strain evidence="10">s5</strain>
        <strain evidence="11">s6</strain>
        <strain evidence="12">s7</strain>
        <strain evidence="13">s8</strain>
    </source>
</reference>
<reference key="3">
    <citation type="journal article" date="2004" name="Genetics">
        <title>Identification of a locus under complex positive selection in Drosophila simulans by haplotype mapping and composite-likelihood estimation.</title>
        <authorList>
            <person name="Meiklejohn C.D."/>
            <person name="Kim Y."/>
            <person name="Hartl D.L."/>
            <person name="Parsch J."/>
        </authorList>
    </citation>
    <scope>NUCLEOTIDE SEQUENCE [GENOMIC DNA]</scope>
    <source>
        <strain>S10</strain>
        <strain>S11</strain>
        <strain>S12</strain>
        <strain>S13</strain>
        <strain>S14</strain>
        <strain>S15</strain>
        <strain>S16</strain>
        <strain>S18</strain>
        <strain>S20</strain>
        <strain>S21</strain>
        <strain>S22</strain>
        <strain>S23</strain>
        <strain>S24</strain>
        <strain>S26</strain>
        <strain>S27</strain>
        <strain>S28</strain>
        <strain>S29</strain>
        <strain>S30</strain>
        <strain>S32</strain>
        <strain>S33</strain>
        <strain>S35</strain>
        <strain>S9</strain>
    </source>
</reference>
<reference evidence="3" key="4">
    <citation type="journal article" date="2000" name="Genetics">
        <title>The population genetics of the origin and divergence of the Drosophila simulans complex species.</title>
        <authorList>
            <person name="Kliman R.M."/>
            <person name="Andolfatto P."/>
            <person name="Coyne J.A."/>
            <person name="Depaulis F."/>
            <person name="Kreitman M."/>
            <person name="Berry A.J."/>
            <person name="McCarter J."/>
            <person name="Wakeley J."/>
            <person name="Hey J."/>
        </authorList>
    </citation>
    <scope>NUCLEOTIDE SEQUENCE [GENOMIC DNA] OF 27-135</scope>
    <source>
        <strain evidence="6">kenya_12</strain>
        <strain evidence="4">kenya_2</strain>
        <strain evidence="5">kenya_5</strain>
    </source>
</reference>